<gene>
    <name type="primary">MYL11</name>
    <name type="synonym">MYLPF</name>
    <name evidence="5" type="synonym">RLC</name>
</gene>
<sequence length="168" mass="18839">MAPKKAKRRAAEGSSNVFSMFDQTQIQEFKEAFTVIDQNRDGIIDKDDLRETFAAMGRLNVKNEELDAMIKEASGPINFTVFLTMFGEKLKGADPEDVIMGAFKVLDPDGKGSIKKSFLEELLTTQCDRFTPEEIKNMWAAFPPDVAGNVDYKNICYVITHGEDKEGE</sequence>
<proteinExistence type="evidence at protein level"/>
<evidence type="ECO:0000250" key="1">
    <source>
        <dbReference type="UniProtKB" id="O93409"/>
    </source>
</evidence>
<evidence type="ECO:0000255" key="2"/>
<evidence type="ECO:0000255" key="3">
    <source>
        <dbReference type="PROSITE-ProRule" id="PRU00448"/>
    </source>
</evidence>
<evidence type="ECO:0000269" key="4">
    <source>
    </source>
</evidence>
<evidence type="ECO:0000303" key="5">
    <source>
    </source>
</evidence>
<evidence type="ECO:0000305" key="6"/>
<evidence type="ECO:0000305" key="7">
    <source>
    </source>
</evidence>
<comment type="function">
    <text evidence="1 4">Myosin regulatory subunit that plays an essential to maintain muscle integrity during early development (By similarity). Plays a role in muscle contraction (PubMed:15256600).</text>
</comment>
<comment type="subunit">
    <text evidence="6">Myosin is a hexamer of 2 heavy chains and 4 light chains.</text>
</comment>
<comment type="PTM">
    <text>The N-terminus is blocked. N,N,N-trimethylalanine, found in other myosin light chains would not have been detected in the N-terminal tryptic peptide in PubMed:7358336 because it would remain trimethylated and ninhydrin negative after hydrolysis.</text>
</comment>
<comment type="miscellaneous">
    <text>This chain binds calcium.</text>
</comment>
<reference key="1">
    <citation type="journal article" date="1985" name="J. Mol. Biol.">
        <title>Recombinant DNA approach for defining the primary structure of monoclonal antibody epitopes.</title>
        <authorList>
            <person name="Reinach F.C."/>
            <person name="Fischman D.A."/>
        </authorList>
    </citation>
    <scope>NUCLEOTIDE SEQUENCE [MRNA]</scope>
</reference>
<reference key="2">
    <citation type="journal article" date="1980" name="Hoppe-Seyler's Z. Physiol. Chem.">
        <title>The amino acid sequence of the L-2 light chain of chicken skeletal muscle myosin.</title>
        <authorList>
            <person name="Suzuyama Y."/>
            <person name="Umegane T."/>
            <person name="Maita T."/>
            <person name="Matsuda G."/>
        </authorList>
    </citation>
    <scope>PROTEIN SEQUENCE OF 3-168</scope>
</reference>
<reference key="3">
    <citation type="journal article" date="1985" name="Eur. J. Biochem.">
        <title>The widespread distribution of alpha-N-trimethylalanine as the N-terminal amino acid of light chains from vertebrate striated muscle myosins.</title>
        <authorList>
            <person name="Henry G.D."/>
            <person name="Trayer I.P."/>
            <person name="Brewer S."/>
            <person name="Levine B.A."/>
        </authorList>
    </citation>
    <scope>METHYLATION AT ALA-2</scope>
</reference>
<reference key="4">
    <citation type="journal article" date="1993" name="Science">
        <title>Three-dimensional structure of myosin subfragment-1: a molecular motor.</title>
        <authorList>
            <person name="Rayment I."/>
            <person name="Rypniewski W.R."/>
            <person name="Schmidt-Base K."/>
            <person name="Smith R."/>
            <person name="Tomchick D.R."/>
            <person name="Benning M.M."/>
            <person name="Winkelmann D.A."/>
            <person name="Wesenberg G."/>
            <person name="Holden H.M."/>
        </authorList>
    </citation>
    <scope>X-RAY CRYSTALLOGRAPHY (2.8 ANGSTROMS)</scope>
</reference>
<reference key="5">
    <citation type="journal article" date="2004" name="Proc. Natl. Acad. Sci. U.S.A.">
        <title>A point mutation in the regulatory light chain reduces the step size of skeletal muscle myosin.</title>
        <authorList>
            <person name="Sherwood J.J."/>
            <person name="Waller G.S."/>
            <person name="Warshaw D.M."/>
            <person name="Lowey S."/>
        </authorList>
    </citation>
    <scope>FUNCTION</scope>
    <scope>MUTAGENESIS OF PHE-103</scope>
</reference>
<dbReference type="EMBL" id="M11030">
    <property type="protein sequence ID" value="AAA48980.1"/>
    <property type="molecule type" value="mRNA"/>
</dbReference>
<dbReference type="PIR" id="I50393">
    <property type="entry name" value="MOCHLS"/>
</dbReference>
<dbReference type="RefSeq" id="NP_001185673.1">
    <property type="nucleotide sequence ID" value="NM_001198744.1"/>
</dbReference>
<dbReference type="PDB" id="1I84">
    <property type="method" value="EM"/>
    <property type="resolution" value="20.00 A"/>
    <property type="chains" value="U/Z=3-168"/>
</dbReference>
<dbReference type="PDB" id="1M8Q">
    <property type="method" value="EM"/>
    <property type="resolution" value="70.00 A"/>
    <property type="chains" value="B/E/H/Q=21-164"/>
</dbReference>
<dbReference type="PDB" id="1MVW">
    <property type="method" value="EM"/>
    <property type="resolution" value="70.00 A"/>
    <property type="chains" value="B/E/H/K/N/Q=26-164"/>
</dbReference>
<dbReference type="PDB" id="1O18">
    <property type="method" value="EM"/>
    <property type="resolution" value="70.00 A"/>
    <property type="chains" value="E/H/K/N/Q=26-164"/>
</dbReference>
<dbReference type="PDB" id="1O19">
    <property type="method" value="EM"/>
    <property type="resolution" value="70.00 A"/>
    <property type="chains" value="B/E/H/K/N/T=26-164"/>
</dbReference>
<dbReference type="PDB" id="1O1A">
    <property type="method" value="EM"/>
    <property type="resolution" value="70.00 A"/>
    <property type="chains" value="B/E/H/K/N/Q=26-164"/>
</dbReference>
<dbReference type="PDB" id="1O1B">
    <property type="method" value="EM"/>
    <property type="resolution" value="70.00 A"/>
    <property type="chains" value="B/E/H/K=26-164"/>
</dbReference>
<dbReference type="PDB" id="1O1C">
    <property type="method" value="EM"/>
    <property type="resolution" value="70.00 A"/>
    <property type="chains" value="B/E/H/K/Q=26-164"/>
</dbReference>
<dbReference type="PDB" id="1O1D">
    <property type="method" value="EM"/>
    <property type="resolution" value="70.00 A"/>
    <property type="chains" value="B/E/H/K/N/Q=26-164"/>
</dbReference>
<dbReference type="PDB" id="1O1E">
    <property type="method" value="EM"/>
    <property type="resolution" value="70.00 A"/>
    <property type="chains" value="B/E/H/K/N/Q=26-164"/>
</dbReference>
<dbReference type="PDB" id="1O1F">
    <property type="method" value="EM"/>
    <property type="resolution" value="70.00 A"/>
    <property type="chains" value="B/E/H/K=26-164"/>
</dbReference>
<dbReference type="PDB" id="1O1G">
    <property type="method" value="EM"/>
    <property type="resolution" value="70.00 A"/>
    <property type="chains" value="B/E/H/K/N/Q=26-164"/>
</dbReference>
<dbReference type="PDB" id="2MYS">
    <property type="method" value="X-ray"/>
    <property type="resolution" value="2.80 A"/>
    <property type="chains" value="B=3-168"/>
</dbReference>
<dbReference type="PDB" id="2W4A">
    <property type="method" value="EM"/>
    <property type="resolution" value="35.00 A"/>
    <property type="chains" value="B=16-165"/>
</dbReference>
<dbReference type="PDB" id="2W4G">
    <property type="method" value="EM"/>
    <property type="resolution" value="35.00 A"/>
    <property type="chains" value="B=16-165"/>
</dbReference>
<dbReference type="PDB" id="2W4H">
    <property type="method" value="EM"/>
    <property type="resolution" value="35.00 A"/>
    <property type="chains" value="B=16-165"/>
</dbReference>
<dbReference type="PDBsum" id="1I84"/>
<dbReference type="PDBsum" id="1M8Q"/>
<dbReference type="PDBsum" id="1MVW"/>
<dbReference type="PDBsum" id="1O18"/>
<dbReference type="PDBsum" id="1O19"/>
<dbReference type="PDBsum" id="1O1A"/>
<dbReference type="PDBsum" id="1O1B"/>
<dbReference type="PDBsum" id="1O1C"/>
<dbReference type="PDBsum" id="1O1D"/>
<dbReference type="PDBsum" id="1O1E"/>
<dbReference type="PDBsum" id="1O1F"/>
<dbReference type="PDBsum" id="1O1G"/>
<dbReference type="PDBsum" id="2MYS"/>
<dbReference type="PDBsum" id="2W4A"/>
<dbReference type="PDBsum" id="2W4G"/>
<dbReference type="PDBsum" id="2W4H"/>
<dbReference type="SMR" id="P02609"/>
<dbReference type="FunCoup" id="P02609">
    <property type="interactions" value="236"/>
</dbReference>
<dbReference type="STRING" id="9031.ENSGALP00000066678"/>
<dbReference type="iPTMnet" id="P02609"/>
<dbReference type="Ensembl" id="ENSGALT00010000546.1">
    <property type="protein sequence ID" value="ENSGALP00010000314.1"/>
    <property type="gene ID" value="ENSGALG00010000285.1"/>
</dbReference>
<dbReference type="GeneID" id="776775"/>
<dbReference type="KEGG" id="gga:776775"/>
<dbReference type="CTD" id="17907"/>
<dbReference type="VEuPathDB" id="HostDB:geneid_776775"/>
<dbReference type="GeneTree" id="ENSGT00940000159038"/>
<dbReference type="InParanoid" id="P02609"/>
<dbReference type="OMA" id="KDLYAMM"/>
<dbReference type="OrthoDB" id="429467at2759"/>
<dbReference type="PhylomeDB" id="P02609"/>
<dbReference type="BRENDA" id="5.6.1.8">
    <property type="organism ID" value="1306"/>
</dbReference>
<dbReference type="EvolutionaryTrace" id="P02609"/>
<dbReference type="PRO" id="PR:P02609"/>
<dbReference type="Proteomes" id="UP000000539">
    <property type="component" value="Unassembled WGS sequence"/>
</dbReference>
<dbReference type="GO" id="GO:0005737">
    <property type="term" value="C:cytoplasm"/>
    <property type="evidence" value="ECO:0000318"/>
    <property type="project" value="GO_Central"/>
</dbReference>
<dbReference type="GO" id="GO:0016459">
    <property type="term" value="C:myosin complex"/>
    <property type="evidence" value="ECO:0007669"/>
    <property type="project" value="UniProtKB-KW"/>
</dbReference>
<dbReference type="GO" id="GO:0005509">
    <property type="term" value="F:calcium ion binding"/>
    <property type="evidence" value="ECO:0000318"/>
    <property type="project" value="GO_Central"/>
</dbReference>
<dbReference type="GO" id="GO:0006936">
    <property type="term" value="P:muscle contraction"/>
    <property type="evidence" value="ECO:0000315"/>
    <property type="project" value="UniProtKB"/>
</dbReference>
<dbReference type="GO" id="GO:0007519">
    <property type="term" value="P:skeletal muscle tissue development"/>
    <property type="evidence" value="ECO:0000250"/>
    <property type="project" value="UniProtKB"/>
</dbReference>
<dbReference type="FunFam" id="1.10.238.10:FF:000010">
    <property type="entry name" value="Myosin regulatory light chain 2, atrial isoform"/>
    <property type="match status" value="1"/>
</dbReference>
<dbReference type="FunFam" id="1.10.238.10:FF:000007">
    <property type="entry name" value="Putative myosin regulatory light chain sqh"/>
    <property type="match status" value="1"/>
</dbReference>
<dbReference type="Gene3D" id="1.10.238.10">
    <property type="entry name" value="EF-hand"/>
    <property type="match status" value="2"/>
</dbReference>
<dbReference type="InterPro" id="IPR011992">
    <property type="entry name" value="EF-hand-dom_pair"/>
</dbReference>
<dbReference type="InterPro" id="IPR018247">
    <property type="entry name" value="EF_Hand_1_Ca_BS"/>
</dbReference>
<dbReference type="InterPro" id="IPR002048">
    <property type="entry name" value="EF_hand_dom"/>
</dbReference>
<dbReference type="InterPro" id="IPR050403">
    <property type="entry name" value="Myosin_RLC"/>
</dbReference>
<dbReference type="PANTHER" id="PTHR23049">
    <property type="entry name" value="MYOSIN REGULATORY LIGHT CHAIN 2"/>
    <property type="match status" value="1"/>
</dbReference>
<dbReference type="Pfam" id="PF13405">
    <property type="entry name" value="EF-hand_6"/>
    <property type="match status" value="1"/>
</dbReference>
<dbReference type="SMART" id="SM00054">
    <property type="entry name" value="EFh"/>
    <property type="match status" value="2"/>
</dbReference>
<dbReference type="SUPFAM" id="SSF47473">
    <property type="entry name" value="EF-hand"/>
    <property type="match status" value="1"/>
</dbReference>
<dbReference type="PROSITE" id="PS00018">
    <property type="entry name" value="EF_HAND_1"/>
    <property type="match status" value="1"/>
</dbReference>
<dbReference type="PROSITE" id="PS50222">
    <property type="entry name" value="EF_HAND_2"/>
    <property type="match status" value="3"/>
</dbReference>
<name>MYL11_CHICK</name>
<protein>
    <recommendedName>
        <fullName>Myosin regulatory light chain 11</fullName>
    </recommendedName>
    <alternativeName>
        <fullName>DTNB</fullName>
    </alternativeName>
    <alternativeName>
        <fullName>Fast skeletal myosin light chain 2</fullName>
        <shortName>MLC-2</shortName>
    </alternativeName>
    <alternativeName>
        <fullName>G2</fullName>
    </alternativeName>
    <alternativeName>
        <fullName>LC2f</fullName>
    </alternativeName>
    <alternativeName>
        <fullName>Myosin light chain 11</fullName>
    </alternativeName>
    <alternativeName>
        <fullName>Myosin regulatory light chain 2, skeletal muscle isoform</fullName>
    </alternativeName>
</protein>
<organism>
    <name type="scientific">Gallus gallus</name>
    <name type="common">Chicken</name>
    <dbReference type="NCBI Taxonomy" id="9031"/>
    <lineage>
        <taxon>Eukaryota</taxon>
        <taxon>Metazoa</taxon>
        <taxon>Chordata</taxon>
        <taxon>Craniata</taxon>
        <taxon>Vertebrata</taxon>
        <taxon>Euteleostomi</taxon>
        <taxon>Archelosauria</taxon>
        <taxon>Archosauria</taxon>
        <taxon>Dinosauria</taxon>
        <taxon>Saurischia</taxon>
        <taxon>Theropoda</taxon>
        <taxon>Coelurosauria</taxon>
        <taxon>Aves</taxon>
        <taxon>Neognathae</taxon>
        <taxon>Galloanserae</taxon>
        <taxon>Galliformes</taxon>
        <taxon>Phasianidae</taxon>
        <taxon>Phasianinae</taxon>
        <taxon>Gallus</taxon>
    </lineage>
</organism>
<feature type="initiator methionine" description="Removed">
    <location>
        <position position="1"/>
    </location>
</feature>
<feature type="chain" id="PRO_0000019308" description="Myosin regulatory light chain 11">
    <location>
        <begin position="2"/>
        <end position="168"/>
    </location>
</feature>
<feature type="domain" description="EF-hand 1" evidence="3">
    <location>
        <begin position="24"/>
        <end position="59"/>
    </location>
</feature>
<feature type="domain" description="EF-hand 2" evidence="3">
    <location>
        <begin position="94"/>
        <end position="129"/>
    </location>
</feature>
<feature type="domain" description="EF-hand 3" evidence="3">
    <location>
        <begin position="130"/>
        <end position="165"/>
    </location>
</feature>
<feature type="binding site" evidence="3">
    <location>
        <position position="37"/>
    </location>
    <ligand>
        <name>Ca(2+)</name>
        <dbReference type="ChEBI" id="CHEBI:29108"/>
    </ligand>
</feature>
<feature type="binding site" evidence="3">
    <location>
        <position position="39"/>
    </location>
    <ligand>
        <name>Ca(2+)</name>
        <dbReference type="ChEBI" id="CHEBI:29108"/>
    </ligand>
</feature>
<feature type="binding site" evidence="3">
    <location>
        <position position="41"/>
    </location>
    <ligand>
        <name>Ca(2+)</name>
        <dbReference type="ChEBI" id="CHEBI:29108"/>
    </ligand>
</feature>
<feature type="binding site" evidence="3">
    <location>
        <position position="48"/>
    </location>
    <ligand>
        <name>Ca(2+)</name>
        <dbReference type="ChEBI" id="CHEBI:29108"/>
    </ligand>
</feature>
<feature type="modified residue" description="N,N,N-trimethylalanine" evidence="7">
    <location>
        <position position="2"/>
    </location>
</feature>
<feature type="modified residue" description="Phosphoserine" evidence="2">
    <location>
        <position position="15"/>
    </location>
</feature>
<feature type="mutagenesis site" description="Results in 50% reduction in actin filament velocity." evidence="4">
    <original>F</original>
    <variation>L</variation>
    <location>
        <position position="103"/>
    </location>
</feature>
<feature type="sequence conflict" description="In Ref. 1; AAA48980." evidence="6" ref="1">
    <original>V</original>
    <variation>L</variation>
    <location>
        <position position="61"/>
    </location>
</feature>
<feature type="sequence conflict" description="In Ref. 1; AAA48980." evidence="6" ref="1">
    <original>F</original>
    <variation>L</variation>
    <location>
        <position position="103"/>
    </location>
</feature>
<accession>P02609</accession>
<accession>Q90915</accession>
<keyword id="KW-0002">3D-structure</keyword>
<keyword id="KW-0106">Calcium</keyword>
<keyword id="KW-0903">Direct protein sequencing</keyword>
<keyword id="KW-0479">Metal-binding</keyword>
<keyword id="KW-0488">Methylation</keyword>
<keyword id="KW-0505">Motor protein</keyword>
<keyword id="KW-0514">Muscle protein</keyword>
<keyword id="KW-0518">Myosin</keyword>
<keyword id="KW-0597">Phosphoprotein</keyword>
<keyword id="KW-1185">Reference proteome</keyword>
<keyword id="KW-0677">Repeat</keyword>